<sequence>MFDIVLYQPEIPPNTGNIIRLCANTGTRLHLVKPLGFSLEDKQLKRAGLDYHEYANMQVHENWEACCAALAGRRMFALTTKGSARHSTIAFQEGDVFVFGPETRGLPEEIRDQFTPEHRVRLPMMPNNRSLNLSNSAAVLLYEAWRQHDFAGAV</sequence>
<reference key="1">
    <citation type="submission" date="2009-07" db="EMBL/GenBank/DDBJ databases">
        <title>Complete sequence of chromosome of Methylovorus sp. SIP3-4.</title>
        <authorList>
            <person name="Lucas S."/>
            <person name="Copeland A."/>
            <person name="Lapidus A."/>
            <person name="Glavina del Rio T."/>
            <person name="Tice H."/>
            <person name="Bruce D."/>
            <person name="Goodwin L."/>
            <person name="Pitluck S."/>
            <person name="Clum A."/>
            <person name="Larimer F."/>
            <person name="Land M."/>
            <person name="Hauser L."/>
            <person name="Kyrpides N."/>
            <person name="Mikhailova N."/>
            <person name="Kayluzhnaya M."/>
            <person name="Chistoserdova L."/>
        </authorList>
    </citation>
    <scope>NUCLEOTIDE SEQUENCE [LARGE SCALE GENOMIC DNA]</scope>
    <source>
        <strain>SIP3-4</strain>
    </source>
</reference>
<accession>C6X9I5</accession>
<dbReference type="EC" id="2.1.1.207" evidence="1"/>
<dbReference type="EMBL" id="CP001674">
    <property type="protein sequence ID" value="ACT49805.1"/>
    <property type="status" value="ALT_INIT"/>
    <property type="molecule type" value="Genomic_DNA"/>
</dbReference>
<dbReference type="RefSeq" id="WP_041370295.1">
    <property type="nucleotide sequence ID" value="NC_012969.1"/>
</dbReference>
<dbReference type="SMR" id="C6X9I5"/>
<dbReference type="STRING" id="582744.Msip34_0557"/>
<dbReference type="KEGG" id="mei:Msip34_0557"/>
<dbReference type="eggNOG" id="COG0219">
    <property type="taxonomic scope" value="Bacteria"/>
</dbReference>
<dbReference type="HOGENOM" id="CLU_110125_1_0_4"/>
<dbReference type="OrthoDB" id="9789043at2"/>
<dbReference type="Proteomes" id="UP000002743">
    <property type="component" value="Chromosome"/>
</dbReference>
<dbReference type="GO" id="GO:0005737">
    <property type="term" value="C:cytoplasm"/>
    <property type="evidence" value="ECO:0007669"/>
    <property type="project" value="UniProtKB-SubCell"/>
</dbReference>
<dbReference type="GO" id="GO:0003723">
    <property type="term" value="F:RNA binding"/>
    <property type="evidence" value="ECO:0007669"/>
    <property type="project" value="InterPro"/>
</dbReference>
<dbReference type="GO" id="GO:0141102">
    <property type="term" value="F:tRNA (5-carboxymethylaminomethyluridine(34)-2'-O)-methyltransferase activity"/>
    <property type="evidence" value="ECO:0007669"/>
    <property type="project" value="RHEA"/>
</dbReference>
<dbReference type="GO" id="GO:0141098">
    <property type="term" value="F:tRNA (cytidine(34)-2'-O)-methyltransferase activity"/>
    <property type="evidence" value="ECO:0007669"/>
    <property type="project" value="RHEA"/>
</dbReference>
<dbReference type="GO" id="GO:0002130">
    <property type="term" value="P:wobble position ribose methylation"/>
    <property type="evidence" value="ECO:0007669"/>
    <property type="project" value="TreeGrafter"/>
</dbReference>
<dbReference type="CDD" id="cd18094">
    <property type="entry name" value="SpoU-like_TrmL"/>
    <property type="match status" value="1"/>
</dbReference>
<dbReference type="FunFam" id="3.40.1280.10:FF:000002">
    <property type="entry name" value="Peptidylprolyl isomerase"/>
    <property type="match status" value="1"/>
</dbReference>
<dbReference type="Gene3D" id="3.40.1280.10">
    <property type="match status" value="1"/>
</dbReference>
<dbReference type="HAMAP" id="MF_01885">
    <property type="entry name" value="tRNA_methyltr_TrmL"/>
    <property type="match status" value="1"/>
</dbReference>
<dbReference type="InterPro" id="IPR029028">
    <property type="entry name" value="Alpha/beta_knot_MTases"/>
</dbReference>
<dbReference type="InterPro" id="IPR001537">
    <property type="entry name" value="SpoU_MeTrfase"/>
</dbReference>
<dbReference type="InterPro" id="IPR016914">
    <property type="entry name" value="TrmL"/>
</dbReference>
<dbReference type="InterPro" id="IPR029026">
    <property type="entry name" value="tRNA_m1G_MTases_N"/>
</dbReference>
<dbReference type="NCBIfam" id="TIGR00185">
    <property type="entry name" value="tRNA_yibK_trmL"/>
    <property type="match status" value="1"/>
</dbReference>
<dbReference type="PANTHER" id="PTHR42971">
    <property type="entry name" value="TRNA (CYTIDINE(34)-2'-O)-METHYLTRANSFERASE"/>
    <property type="match status" value="1"/>
</dbReference>
<dbReference type="PANTHER" id="PTHR42971:SF1">
    <property type="entry name" value="TRNA (CYTIDINE(34)-2'-O)-METHYLTRANSFERASE"/>
    <property type="match status" value="1"/>
</dbReference>
<dbReference type="Pfam" id="PF00588">
    <property type="entry name" value="SpoU_methylase"/>
    <property type="match status" value="1"/>
</dbReference>
<dbReference type="PIRSF" id="PIRSF029256">
    <property type="entry name" value="SpoU_TrmH_prd"/>
    <property type="match status" value="1"/>
</dbReference>
<dbReference type="SUPFAM" id="SSF75217">
    <property type="entry name" value="alpha/beta knot"/>
    <property type="match status" value="1"/>
</dbReference>
<organism>
    <name type="scientific">Methylovorus glucosotrophus (strain SIP3-4)</name>
    <dbReference type="NCBI Taxonomy" id="582744"/>
    <lineage>
        <taxon>Bacteria</taxon>
        <taxon>Pseudomonadati</taxon>
        <taxon>Pseudomonadota</taxon>
        <taxon>Betaproteobacteria</taxon>
        <taxon>Nitrosomonadales</taxon>
        <taxon>Methylophilaceae</taxon>
        <taxon>Methylovorus</taxon>
    </lineage>
</organism>
<proteinExistence type="inferred from homology"/>
<feature type="chain" id="PRO_0000401948" description="tRNA (cytidine(34)-2'-O)-methyltransferase">
    <location>
        <begin position="1"/>
        <end position="154"/>
    </location>
</feature>
<feature type="binding site" evidence="1">
    <location>
        <position position="78"/>
    </location>
    <ligand>
        <name>S-adenosyl-L-methionine</name>
        <dbReference type="ChEBI" id="CHEBI:59789"/>
    </ligand>
</feature>
<feature type="binding site" evidence="1">
    <location>
        <position position="100"/>
    </location>
    <ligand>
        <name>S-adenosyl-L-methionine</name>
        <dbReference type="ChEBI" id="CHEBI:59789"/>
    </ligand>
</feature>
<feature type="binding site" evidence="1">
    <location>
        <position position="122"/>
    </location>
    <ligand>
        <name>S-adenosyl-L-methionine</name>
        <dbReference type="ChEBI" id="CHEBI:59789"/>
    </ligand>
</feature>
<feature type="binding site" evidence="1">
    <location>
        <position position="130"/>
    </location>
    <ligand>
        <name>S-adenosyl-L-methionine</name>
        <dbReference type="ChEBI" id="CHEBI:59789"/>
    </ligand>
</feature>
<name>TRML_METGS</name>
<comment type="function">
    <text evidence="1">Methylates the ribose at the nucleotide 34 wobble position in the two leucyl isoacceptors tRNA(Leu)(CmAA) and tRNA(Leu)(cmnm5UmAA). Catalyzes the methyl transfer from S-adenosyl-L-methionine to the 2'-OH of the wobble nucleotide.</text>
</comment>
<comment type="catalytic activity">
    <reaction evidence="1">
        <text>cytidine(34) in tRNA + S-adenosyl-L-methionine = 2'-O-methylcytidine(34) in tRNA + S-adenosyl-L-homocysteine + H(+)</text>
        <dbReference type="Rhea" id="RHEA:43084"/>
        <dbReference type="Rhea" id="RHEA-COMP:10331"/>
        <dbReference type="Rhea" id="RHEA-COMP:10332"/>
        <dbReference type="ChEBI" id="CHEBI:15378"/>
        <dbReference type="ChEBI" id="CHEBI:57856"/>
        <dbReference type="ChEBI" id="CHEBI:59789"/>
        <dbReference type="ChEBI" id="CHEBI:74495"/>
        <dbReference type="ChEBI" id="CHEBI:82748"/>
        <dbReference type="EC" id="2.1.1.207"/>
    </reaction>
</comment>
<comment type="catalytic activity">
    <reaction evidence="1">
        <text>5-carboxymethylaminomethyluridine(34) in tRNA(Leu) + S-adenosyl-L-methionine = 5-carboxymethylaminomethyl-2'-O-methyluridine(34) in tRNA(Leu) + S-adenosyl-L-homocysteine + H(+)</text>
        <dbReference type="Rhea" id="RHEA:43088"/>
        <dbReference type="Rhea" id="RHEA-COMP:10333"/>
        <dbReference type="Rhea" id="RHEA-COMP:10334"/>
        <dbReference type="ChEBI" id="CHEBI:15378"/>
        <dbReference type="ChEBI" id="CHEBI:57856"/>
        <dbReference type="ChEBI" id="CHEBI:59789"/>
        <dbReference type="ChEBI" id="CHEBI:74508"/>
        <dbReference type="ChEBI" id="CHEBI:74511"/>
        <dbReference type="EC" id="2.1.1.207"/>
    </reaction>
</comment>
<comment type="subunit">
    <text evidence="1">Homodimer.</text>
</comment>
<comment type="subcellular location">
    <subcellularLocation>
        <location evidence="1">Cytoplasm</location>
    </subcellularLocation>
</comment>
<comment type="similarity">
    <text evidence="1">Belongs to the class IV-like SAM-binding methyltransferase superfamily. RNA methyltransferase TrmH family. TrmL subfamily.</text>
</comment>
<comment type="sequence caution" evidence="2">
    <conflict type="erroneous initiation">
        <sequence resource="EMBL-CDS" id="ACT49805"/>
    </conflict>
    <text>Extended N-terminus.</text>
</comment>
<protein>
    <recommendedName>
        <fullName evidence="1">tRNA (cytidine(34)-2'-O)-methyltransferase</fullName>
        <ecNumber evidence="1">2.1.1.207</ecNumber>
    </recommendedName>
    <alternativeName>
        <fullName evidence="1">tRNA (cytidine/uridine-2'-O-)-methyltransferase TrmL</fullName>
    </alternativeName>
</protein>
<evidence type="ECO:0000255" key="1">
    <source>
        <dbReference type="HAMAP-Rule" id="MF_01885"/>
    </source>
</evidence>
<evidence type="ECO:0000305" key="2"/>
<keyword id="KW-0963">Cytoplasm</keyword>
<keyword id="KW-0489">Methyltransferase</keyword>
<keyword id="KW-1185">Reference proteome</keyword>
<keyword id="KW-0949">S-adenosyl-L-methionine</keyword>
<keyword id="KW-0808">Transferase</keyword>
<keyword id="KW-0819">tRNA processing</keyword>
<gene>
    <name evidence="1" type="primary">trmL</name>
    <name type="ordered locus">Msip34_0557</name>
</gene>